<accession>P30801</accession>
<gene>
    <name type="primary">S100A6</name>
</gene>
<comment type="function">
    <text evidence="1">May function as calcium sensor and modulator, contributing to cellular calcium signaling. May function by interacting with other proteins, such as TPR-containing proteins, and indirectly play a role in many physiological processes such as the reorganization of the actin cytoskeleton and in cell motility. Binds 2 calcium ions. Calcium binding is cooperative (By similarity).</text>
</comment>
<comment type="subunit">
    <text evidence="1">Homodimer; head to tail assembly of 2 subunits. Interacts with CACYBP in a calcium-dependent manner. Interacts with ANXA2 and ANXA11 (via N-terminus). Interacts with SUGT1. Interacts with TP53; has higher affinity for TP53 that is phosphorylated on its N-terminal domain, and lower affinity for TP53 that is phosphorylated on its C-terminal domain. Interacts with tropomyosin. Interacts with FKBP4. Interacts with PPP5C (via TPR repeats); the interaction is calcium-dependent and modulates PPP5C activity. Interacts with TPPP; this interaction inhibits TPPP dimerization (By similarity).</text>
</comment>
<comment type="subcellular location">
    <subcellularLocation>
        <location evidence="1">Nucleus envelope</location>
    </subcellularLocation>
    <subcellularLocation>
        <location evidence="1">Cytoplasm</location>
    </subcellularLocation>
    <subcellularLocation>
        <location evidence="1">Cell membrane</location>
        <topology evidence="1">Peripheral membrane protein</topology>
        <orientation evidence="1">Cytoplasmic side</orientation>
    </subcellularLocation>
</comment>
<comment type="similarity">
    <text evidence="5">Belongs to the S-100 family.</text>
</comment>
<dbReference type="EMBL" id="D10885">
    <property type="protein sequence ID" value="BAA01707.1"/>
    <property type="molecule type" value="mRNA"/>
</dbReference>
<dbReference type="PIR" id="S27011">
    <property type="entry name" value="S27011"/>
</dbReference>
<dbReference type="RefSeq" id="NP_001182671.1">
    <property type="nucleotide sequence ID" value="NM_001195742.1"/>
</dbReference>
<dbReference type="RefSeq" id="XP_051712057.1">
    <property type="nucleotide sequence ID" value="XM_051856097.2"/>
</dbReference>
<dbReference type="PDB" id="1A03">
    <property type="method" value="NMR"/>
    <property type="chains" value="A/B=1-90"/>
</dbReference>
<dbReference type="PDB" id="1CNP">
    <property type="method" value="NMR"/>
    <property type="chains" value="A/B=1-90"/>
</dbReference>
<dbReference type="PDB" id="1JWD">
    <property type="method" value="NMR"/>
    <property type="chains" value="A/B=1-90"/>
</dbReference>
<dbReference type="PDB" id="2CNP">
    <property type="method" value="NMR"/>
    <property type="chains" value="A/B=1-90"/>
</dbReference>
<dbReference type="PDB" id="2JTT">
    <property type="method" value="NMR"/>
    <property type="chains" value="A/B=1-90"/>
</dbReference>
<dbReference type="PDBsum" id="1A03"/>
<dbReference type="PDBsum" id="1CNP"/>
<dbReference type="PDBsum" id="1JWD"/>
<dbReference type="PDBsum" id="2CNP"/>
<dbReference type="PDBsum" id="2JTT"/>
<dbReference type="BMRB" id="P30801"/>
<dbReference type="SMR" id="P30801"/>
<dbReference type="FunCoup" id="P30801">
    <property type="interactions" value="54"/>
</dbReference>
<dbReference type="STRING" id="9986.ENSOCUP00000031840"/>
<dbReference type="PaxDb" id="9986-ENSOCUP00000017711"/>
<dbReference type="GeneID" id="100348755"/>
<dbReference type="KEGG" id="ocu:100348755"/>
<dbReference type="CTD" id="6277"/>
<dbReference type="eggNOG" id="ENOG502S6IN">
    <property type="taxonomic scope" value="Eukaryota"/>
</dbReference>
<dbReference type="HOGENOM" id="CLU_138624_2_0_1"/>
<dbReference type="InParanoid" id="P30801"/>
<dbReference type="OMA" id="FVAIFHK"/>
<dbReference type="OrthoDB" id="8881129at2759"/>
<dbReference type="TreeFam" id="TF332727"/>
<dbReference type="EvolutionaryTrace" id="P30801"/>
<dbReference type="Proteomes" id="UP000001811">
    <property type="component" value="Unplaced"/>
</dbReference>
<dbReference type="GO" id="GO:0009898">
    <property type="term" value="C:cytoplasmic side of plasma membrane"/>
    <property type="evidence" value="ECO:0000250"/>
    <property type="project" value="UniProtKB"/>
</dbReference>
<dbReference type="GO" id="GO:0005829">
    <property type="term" value="C:cytosol"/>
    <property type="evidence" value="ECO:0000250"/>
    <property type="project" value="UniProtKB"/>
</dbReference>
<dbReference type="GO" id="GO:0005615">
    <property type="term" value="C:extracellular space"/>
    <property type="evidence" value="ECO:0007669"/>
    <property type="project" value="TreeGrafter"/>
</dbReference>
<dbReference type="GO" id="GO:0005635">
    <property type="term" value="C:nuclear envelope"/>
    <property type="evidence" value="ECO:0007669"/>
    <property type="project" value="UniProtKB-SubCell"/>
</dbReference>
<dbReference type="GO" id="GO:0048471">
    <property type="term" value="C:perinuclear region of cytoplasm"/>
    <property type="evidence" value="ECO:0007669"/>
    <property type="project" value="TreeGrafter"/>
</dbReference>
<dbReference type="GO" id="GO:0005509">
    <property type="term" value="F:calcium ion binding"/>
    <property type="evidence" value="ECO:0000250"/>
    <property type="project" value="UniProtKB"/>
</dbReference>
<dbReference type="GO" id="GO:0048306">
    <property type="term" value="F:calcium-dependent protein binding"/>
    <property type="evidence" value="ECO:0007669"/>
    <property type="project" value="TreeGrafter"/>
</dbReference>
<dbReference type="GO" id="GO:0044548">
    <property type="term" value="F:S100 protein binding"/>
    <property type="evidence" value="ECO:0007669"/>
    <property type="project" value="TreeGrafter"/>
</dbReference>
<dbReference type="CDD" id="cd05029">
    <property type="entry name" value="S-100A6"/>
    <property type="match status" value="1"/>
</dbReference>
<dbReference type="FunFam" id="1.10.238.10:FF:000044">
    <property type="entry name" value="Protein S100"/>
    <property type="match status" value="1"/>
</dbReference>
<dbReference type="Gene3D" id="1.10.238.10">
    <property type="entry name" value="EF-hand"/>
    <property type="match status" value="1"/>
</dbReference>
<dbReference type="InterPro" id="IPR011992">
    <property type="entry name" value="EF-hand-dom_pair"/>
</dbReference>
<dbReference type="InterPro" id="IPR018247">
    <property type="entry name" value="EF_Hand_1_Ca_BS"/>
</dbReference>
<dbReference type="InterPro" id="IPR002048">
    <property type="entry name" value="EF_hand_dom"/>
</dbReference>
<dbReference type="InterPro" id="IPR034118">
    <property type="entry name" value="S-100A6"/>
</dbReference>
<dbReference type="InterPro" id="IPR001751">
    <property type="entry name" value="S100/CaBP7/8-like_CS"/>
</dbReference>
<dbReference type="InterPro" id="IPR013787">
    <property type="entry name" value="S100_Ca-bd_sub"/>
</dbReference>
<dbReference type="PANTHER" id="PTHR11639:SF80">
    <property type="entry name" value="PROTEIN S100-A6"/>
    <property type="match status" value="1"/>
</dbReference>
<dbReference type="PANTHER" id="PTHR11639">
    <property type="entry name" value="S100 CALCIUM-BINDING PROTEIN"/>
    <property type="match status" value="1"/>
</dbReference>
<dbReference type="Pfam" id="PF01023">
    <property type="entry name" value="S_100"/>
    <property type="match status" value="1"/>
</dbReference>
<dbReference type="SMART" id="SM00054">
    <property type="entry name" value="EFh"/>
    <property type="match status" value="1"/>
</dbReference>
<dbReference type="SMART" id="SM01394">
    <property type="entry name" value="S_100"/>
    <property type="match status" value="1"/>
</dbReference>
<dbReference type="SUPFAM" id="SSF47473">
    <property type="entry name" value="EF-hand"/>
    <property type="match status" value="1"/>
</dbReference>
<dbReference type="PROSITE" id="PS00018">
    <property type="entry name" value="EF_HAND_1"/>
    <property type="match status" value="1"/>
</dbReference>
<dbReference type="PROSITE" id="PS50222">
    <property type="entry name" value="EF_HAND_2"/>
    <property type="match status" value="1"/>
</dbReference>
<dbReference type="PROSITE" id="PS00303">
    <property type="entry name" value="S100_CABP"/>
    <property type="match status" value="1"/>
</dbReference>
<organism>
    <name type="scientific">Oryctolagus cuniculus</name>
    <name type="common">Rabbit</name>
    <dbReference type="NCBI Taxonomy" id="9986"/>
    <lineage>
        <taxon>Eukaryota</taxon>
        <taxon>Metazoa</taxon>
        <taxon>Chordata</taxon>
        <taxon>Craniata</taxon>
        <taxon>Vertebrata</taxon>
        <taxon>Euteleostomi</taxon>
        <taxon>Mammalia</taxon>
        <taxon>Eutheria</taxon>
        <taxon>Euarchontoglires</taxon>
        <taxon>Glires</taxon>
        <taxon>Lagomorpha</taxon>
        <taxon>Leporidae</taxon>
        <taxon>Oryctolagus</taxon>
    </lineage>
</organism>
<proteinExistence type="evidence at protein level"/>
<evidence type="ECO:0000250" key="1"/>
<evidence type="ECO:0000250" key="2">
    <source>
        <dbReference type="UniProtKB" id="P06703"/>
    </source>
</evidence>
<evidence type="ECO:0000250" key="3">
    <source>
        <dbReference type="UniProtKB" id="P14069"/>
    </source>
</evidence>
<evidence type="ECO:0000255" key="4">
    <source>
        <dbReference type="PROSITE-ProRule" id="PRU00448"/>
    </source>
</evidence>
<evidence type="ECO:0000305" key="5"/>
<evidence type="ECO:0007829" key="6">
    <source>
        <dbReference type="PDB" id="1A03"/>
    </source>
</evidence>
<evidence type="ECO:0007829" key="7">
    <source>
        <dbReference type="PDB" id="1JWD"/>
    </source>
</evidence>
<reference key="1">
    <citation type="journal article" date="1992" name="FEBS Lett.">
        <title>Site-directed mutation makes rabbit calcyclin dimer.</title>
        <authorList>
            <person name="Ando Y."/>
            <person name="Watanabe M."/>
            <person name="Akatsuka H."/>
            <person name="Tokumitsu H."/>
            <person name="Hidaka H."/>
        </authorList>
    </citation>
    <scope>NUCLEOTIDE SEQUENCE [MRNA]</scope>
</reference>
<reference key="2">
    <citation type="journal article" date="1991" name="Arch. Biochem. Biophys.">
        <title>A calcium-binding protein from rabbit lung cytosol identified as the product of growth-regulated gene (2A9) and its binding proteins.</title>
        <authorList>
            <person name="Tokumitsu H."/>
            <person name="Kobayashi R."/>
            <person name="Hidaka H."/>
        </authorList>
    </citation>
    <scope>PROTEIN SEQUENCE OF 23-31; 36-48 AND 57-89</scope>
    <source>
        <tissue>Lung</tissue>
    </source>
</reference>
<reference key="3">
    <citation type="journal article" date="1991" name="Arch. Biochem. Biophys.">
        <authorList>
            <person name="Tokumitsu H."/>
            <person name="Kobayashi R."/>
            <person name="Hidaka H."/>
        </authorList>
    </citation>
    <scope>ERRATUM OF PUBMED:1898017</scope>
</reference>
<reference key="4">
    <citation type="journal article" date="1998" name="J. Biol. Chem.">
        <title>Regulation of calcyclin (S100A6) binding by alternative splicing in the N-terminal regulatory domain of annexin XI isoforms.</title>
        <authorList>
            <person name="Sudo T."/>
            <person name="Hidaka H."/>
        </authorList>
    </citation>
    <scope>INTERACTION WITH ANXA11</scope>
</reference>
<reference key="5">
    <citation type="journal article" date="1995" name="Nat. Struct. Biol.">
        <title>The structure of calcyclin reveals a novel homodimeric fold for S100 Ca(2+)-binding proteins.</title>
        <authorList>
            <person name="Potts B.C.M."/>
            <person name="Smith J."/>
            <person name="Akke M."/>
            <person name="Macke T.J."/>
            <person name="Okazaki K."/>
            <person name="Hikada H."/>
            <person name="Case D.A."/>
            <person name="Chazin W.J."/>
        </authorList>
    </citation>
    <scope>STRUCTURE BY NMR</scope>
    <scope>SUBUNIT</scope>
    <source>
        <tissue>Lung</tissue>
    </source>
</reference>
<reference key="6">
    <citation type="journal article" date="1998" name="Structure">
        <title>The three-dimensional structure of Ca(2+)-bound calcyclin: implications for Ca(2+)-signal transduction by S100 proteins.</title>
        <authorList>
            <person name="Sastry M."/>
            <person name="Ketchem R.R."/>
            <person name="Crescenzi O."/>
            <person name="Weber C."/>
            <person name="Lubienski M.J."/>
            <person name="Hikada H."/>
            <person name="Chazin W.J."/>
        </authorList>
    </citation>
    <scope>STRUCTURE BY NMR</scope>
    <scope>CALCIUM-BINDING</scope>
    <scope>SUBUNIT</scope>
</reference>
<reference key="7">
    <citation type="journal article" date="2002" name="J. Mol. Biol.">
        <title>A structural basis for S100 protein specificity derived from comparative analysis of apo and Ca(2+)-calcyclin.</title>
        <authorList>
            <person name="Maeler L."/>
            <person name="Sastry M."/>
            <person name="Chazin W.J."/>
        </authorList>
    </citation>
    <scope>STRUCTURE BY NMR</scope>
    <scope>SUBUNIT</scope>
    <scope>CALCIUM-BINDING</scope>
</reference>
<reference key="8">
    <citation type="journal article" date="2008" name="Biochemistry">
        <title>Structure of the S100A6 complex with a fragment from the C-terminal domain of Siah-1 interacting protein: a novel mode for S100 protein target recognition.</title>
        <authorList>
            <person name="Lee Y.-T."/>
            <person name="Dimitrova Y.N."/>
            <person name="Schneider G."/>
            <person name="Ridenour W.B."/>
            <person name="Bhattacharya S."/>
            <person name="Soss S.E."/>
            <person name="Caprioli R.M."/>
            <person name="Filipek A."/>
            <person name="Chazin W.J."/>
        </authorList>
    </citation>
    <scope>STRUCTURE BY NMR IN COMPLEX WITH CACYBP</scope>
    <scope>SUBUNIT</scope>
    <scope>INTERACTION WITH CACYBP</scope>
</reference>
<protein>
    <recommendedName>
        <fullName>Protein S100-A6</fullName>
    </recommendedName>
    <alternativeName>
        <fullName>Calcyclin</fullName>
    </alternativeName>
    <alternativeName>
        <fullName>Lung 10 kDa protein</fullName>
    </alternativeName>
    <alternativeName>
        <fullName>S100 calcium-binding protein A6</fullName>
    </alternativeName>
</protein>
<sequence>MASPLDQAIGLLIGIFHKYSGKEGDKHTLSKKELKELIQKELTIGSKLQDAEIVKLMDDLDRNKDQEVNFQEYITFLGALAMIYNEALKG</sequence>
<name>S10A6_RABIT</name>
<feature type="chain" id="PRO_0000143986" description="Protein S100-A6">
    <location>
        <begin position="1"/>
        <end position="90"/>
    </location>
</feature>
<feature type="domain" description="EF-hand 1" evidence="5">
    <location>
        <begin position="12"/>
        <end position="47"/>
    </location>
</feature>
<feature type="domain" description="EF-hand 2" evidence="4">
    <location>
        <begin position="48"/>
        <end position="83"/>
    </location>
</feature>
<feature type="binding site" evidence="5">
    <location>
        <position position="28"/>
    </location>
    <ligand>
        <name>Ca(2+)</name>
        <dbReference type="ChEBI" id="CHEBI:29108"/>
        <label>1</label>
    </ligand>
</feature>
<feature type="binding site" evidence="5">
    <location>
        <position position="33"/>
    </location>
    <ligand>
        <name>Ca(2+)</name>
        <dbReference type="ChEBI" id="CHEBI:29108"/>
        <label>1</label>
    </ligand>
</feature>
<feature type="binding site" evidence="4">
    <location>
        <position position="61"/>
    </location>
    <ligand>
        <name>Ca(2+)</name>
        <dbReference type="ChEBI" id="CHEBI:29108"/>
        <label>2</label>
    </ligand>
</feature>
<feature type="binding site" evidence="4">
    <location>
        <position position="63"/>
    </location>
    <ligand>
        <name>Ca(2+)</name>
        <dbReference type="ChEBI" id="CHEBI:29108"/>
        <label>2</label>
    </ligand>
</feature>
<feature type="binding site" evidence="4">
    <location>
        <position position="65"/>
    </location>
    <ligand>
        <name>Ca(2+)</name>
        <dbReference type="ChEBI" id="CHEBI:29108"/>
        <label>2</label>
    </ligand>
</feature>
<feature type="binding site" evidence="4">
    <location>
        <position position="67"/>
    </location>
    <ligand>
        <name>Ca(2+)</name>
        <dbReference type="ChEBI" id="CHEBI:29108"/>
        <label>2</label>
    </ligand>
</feature>
<feature type="binding site" evidence="4">
    <location>
        <position position="72"/>
    </location>
    <ligand>
        <name>Ca(2+)</name>
        <dbReference type="ChEBI" id="CHEBI:29108"/>
        <label>2</label>
    </ligand>
</feature>
<feature type="modified residue" description="N6-acetyllysine" evidence="2">
    <location>
        <position position="40"/>
    </location>
</feature>
<feature type="modified residue" description="Phosphoserine" evidence="2">
    <location>
        <position position="46"/>
    </location>
</feature>
<feature type="modified residue" description="N6-acetyllysine; alternate" evidence="3">
    <location>
        <position position="47"/>
    </location>
</feature>
<feature type="modified residue" description="N6-succinyllysine; alternate" evidence="3">
    <location>
        <position position="47"/>
    </location>
</feature>
<feature type="helix" evidence="6">
    <location>
        <begin position="4"/>
        <end position="19"/>
    </location>
</feature>
<feature type="turn" evidence="6">
    <location>
        <begin position="20"/>
        <end position="23"/>
    </location>
</feature>
<feature type="strand" evidence="6">
    <location>
        <begin position="27"/>
        <end position="30"/>
    </location>
</feature>
<feature type="helix" evidence="6">
    <location>
        <begin position="31"/>
        <end position="42"/>
    </location>
</feature>
<feature type="turn" evidence="6">
    <location>
        <begin position="43"/>
        <end position="45"/>
    </location>
</feature>
<feature type="helix" evidence="6">
    <location>
        <begin position="48"/>
        <end position="60"/>
    </location>
</feature>
<feature type="turn" evidence="7">
    <location>
        <begin position="62"/>
        <end position="64"/>
    </location>
</feature>
<feature type="strand" evidence="6">
    <location>
        <begin position="66"/>
        <end position="68"/>
    </location>
</feature>
<feature type="helix" evidence="6">
    <location>
        <begin position="70"/>
        <end position="83"/>
    </location>
</feature>
<feature type="helix" evidence="6">
    <location>
        <begin position="85"/>
        <end position="89"/>
    </location>
</feature>
<keyword id="KW-0002">3D-structure</keyword>
<keyword id="KW-0007">Acetylation</keyword>
<keyword id="KW-0106">Calcium</keyword>
<keyword id="KW-1003">Cell membrane</keyword>
<keyword id="KW-0963">Cytoplasm</keyword>
<keyword id="KW-0903">Direct protein sequencing</keyword>
<keyword id="KW-0472">Membrane</keyword>
<keyword id="KW-0479">Metal-binding</keyword>
<keyword id="KW-0539">Nucleus</keyword>
<keyword id="KW-0597">Phosphoprotein</keyword>
<keyword id="KW-1185">Reference proteome</keyword>
<keyword id="KW-0677">Repeat</keyword>